<evidence type="ECO:0000250" key="1"/>
<evidence type="ECO:0000269" key="2">
    <source>
    </source>
</evidence>
<evidence type="ECO:0000269" key="3">
    <source>
    </source>
</evidence>
<evidence type="ECO:0000305" key="4"/>
<accession>O04004</accession>
<dbReference type="EMBL" id="U89793">
    <property type="protein sequence ID" value="AAB51146.1"/>
    <property type="molecule type" value="mRNA"/>
</dbReference>
<dbReference type="SMR" id="O04004"/>
<dbReference type="Allergome" id="29">
    <property type="allergen name" value="Amb a 6"/>
</dbReference>
<dbReference type="Allergome" id="3070">
    <property type="allergen name" value="Amb a 6.0101"/>
</dbReference>
<dbReference type="GO" id="GO:0008289">
    <property type="term" value="F:lipid binding"/>
    <property type="evidence" value="ECO:0007669"/>
    <property type="project" value="UniProtKB-KW"/>
</dbReference>
<dbReference type="GO" id="GO:0006869">
    <property type="term" value="P:lipid transport"/>
    <property type="evidence" value="ECO:0007669"/>
    <property type="project" value="InterPro"/>
</dbReference>
<dbReference type="CDD" id="cd01960">
    <property type="entry name" value="nsLTP1"/>
    <property type="match status" value="1"/>
</dbReference>
<dbReference type="Gene3D" id="1.10.110.10">
    <property type="entry name" value="Plant lipid-transfer and hydrophobic proteins"/>
    <property type="match status" value="1"/>
</dbReference>
<dbReference type="InterPro" id="IPR036312">
    <property type="entry name" value="Bifun_inhib/LTP/seed_sf"/>
</dbReference>
<dbReference type="InterPro" id="IPR016140">
    <property type="entry name" value="Bifunc_inhib/LTP/seed_store"/>
</dbReference>
<dbReference type="InterPro" id="IPR000528">
    <property type="entry name" value="Plant_nsLTP"/>
</dbReference>
<dbReference type="PANTHER" id="PTHR33076">
    <property type="entry name" value="NON-SPECIFIC LIPID-TRANSFER PROTEIN 2-RELATED"/>
    <property type="match status" value="1"/>
</dbReference>
<dbReference type="Pfam" id="PF00234">
    <property type="entry name" value="Tryp_alpha_amyl"/>
    <property type="match status" value="1"/>
</dbReference>
<dbReference type="PRINTS" id="PR00382">
    <property type="entry name" value="LIPIDTRNSFER"/>
</dbReference>
<dbReference type="SMART" id="SM00499">
    <property type="entry name" value="AAI"/>
    <property type="match status" value="1"/>
</dbReference>
<dbReference type="SUPFAM" id="SSF47699">
    <property type="entry name" value="Bifunctional inhibitor/lipid-transfer protein/seed storage 2S albumin"/>
    <property type="match status" value="1"/>
</dbReference>
<feature type="signal peptide" evidence="2">
    <location>
        <begin position="1"/>
        <end position="25"/>
    </location>
</feature>
<feature type="chain" id="PRO_0000018360" description="Non-specific lipid-transfer protein">
    <location>
        <begin position="26"/>
        <end position="118"/>
    </location>
</feature>
<feature type="disulfide bond" evidence="1">
    <location>
        <begin position="30"/>
        <end position="76"/>
    </location>
</feature>
<feature type="disulfide bond" evidence="1">
    <location>
        <begin position="40"/>
        <end position="53"/>
    </location>
</feature>
<feature type="disulfide bond" evidence="1">
    <location>
        <begin position="54"/>
        <end position="98"/>
    </location>
</feature>
<feature type="disulfide bond" evidence="1">
    <location>
        <begin position="74"/>
        <end position="113"/>
    </location>
</feature>
<feature type="sequence variant" description="In Ra6B." evidence="2">
    <location>
        <position position="26"/>
    </location>
</feature>
<feature type="sequence variant" description="In Ra6A." evidence="2 3">
    <original>S</original>
    <variation>P</variation>
    <location>
        <position position="27"/>
    </location>
</feature>
<feature type="sequence variant" description="In Ra6B." evidence="2">
    <original>T</original>
    <variation>A</variation>
    <location>
        <position position="32"/>
    </location>
</feature>
<feature type="sequence variant" evidence="3">
    <original>T</original>
    <variation>D</variation>
    <location>
        <position position="32"/>
    </location>
</feature>
<feature type="sequence variant" description="In Ra6A." evidence="2 3">
    <original>I</original>
    <variation>N</variation>
    <location>
        <position position="36"/>
    </location>
</feature>
<feature type="sequence variant" evidence="3">
    <original>K</original>
    <variation>P</variation>
    <location>
        <position position="67"/>
    </location>
</feature>
<feature type="sequence variant" evidence="3">
    <original>V</original>
    <variation>M</variation>
    <location>
        <position position="71"/>
    </location>
</feature>
<feature type="sequence variant" evidence="3">
    <original>M</original>
    <variation>V</variation>
    <location>
        <position position="91"/>
    </location>
</feature>
<feature type="sequence variant" evidence="3">
    <original>L</original>
    <variation>F</variation>
    <location>
        <position position="111"/>
    </location>
</feature>
<proteinExistence type="evidence at protein level"/>
<name>NLTP6_AMBAR</name>
<comment type="function">
    <text evidence="1">Plant non-specific lipid-transfer proteins transfer phospholipids as well as galactolipids across membranes. May play a role in wax or cutin deposition in the cell walls of expanding epidermal cells and certain secretory tissues (By similarity).</text>
</comment>
<comment type="allergen">
    <text>Causes an allergic reaction in human. Binds to IgE.</text>
</comment>
<comment type="similarity">
    <text evidence="4">Belongs to the plant LTP family.</text>
</comment>
<keyword id="KW-0020">Allergen</keyword>
<keyword id="KW-0903">Direct protein sequencing</keyword>
<keyword id="KW-1015">Disulfide bond</keyword>
<keyword id="KW-0446">Lipid-binding</keyword>
<keyword id="KW-0732">Signal</keyword>
<keyword id="KW-0813">Transport</keyword>
<organism>
    <name type="scientific">Ambrosia artemisiifolia</name>
    <name type="common">Common ragweed</name>
    <dbReference type="NCBI Taxonomy" id="4212"/>
    <lineage>
        <taxon>Eukaryota</taxon>
        <taxon>Viridiplantae</taxon>
        <taxon>Streptophyta</taxon>
        <taxon>Embryophyta</taxon>
        <taxon>Tracheophyta</taxon>
        <taxon>Spermatophyta</taxon>
        <taxon>Magnoliopsida</taxon>
        <taxon>eudicotyledons</taxon>
        <taxon>Gunneridae</taxon>
        <taxon>Pentapetalae</taxon>
        <taxon>asterids</taxon>
        <taxon>campanulids</taxon>
        <taxon>Asterales</taxon>
        <taxon>Asteraceae</taxon>
        <taxon>Asteroideae</taxon>
        <taxon>Heliantheae alliance</taxon>
        <taxon>Heliantheae</taxon>
        <taxon>Ambrosia</taxon>
    </lineage>
</organism>
<protein>
    <recommendedName>
        <fullName>Non-specific lipid-transfer protein</fullName>
        <shortName>LTP</shortName>
    </recommendedName>
    <alternativeName>
        <fullName>Allergen Amb a VI</fullName>
    </alternativeName>
    <alternativeName>
        <fullName>Allergen Ra6</fullName>
    </alternativeName>
    <alternativeName>
        <fullName>Pollen allergen Amb a 6</fullName>
    </alternativeName>
    <allergenName>Amb a 6</allergenName>
</protein>
<sequence>MDCIRILWSVAVGLLLVSWRPTMFAASPTCDTVQNILAPCAGFLTGQEPSKACCTGVNNLNNSRKTKADRVAVCNCIKELTKSIAYDPKRMPLLSTKCGVKPDFPAVDKNLDCSKLPV</sequence>
<reference key="1">
    <citation type="journal article" date="1998" name="Scand. J. Immunol.">
        <title>Cloning and expression of ragweed allergen Amb a 6.</title>
        <authorList>
            <person name="Hiller K.M."/>
            <person name="Lubahn B.C."/>
            <person name="Klapper D.G."/>
        </authorList>
    </citation>
    <scope>NUCLEOTIDE SEQUENCE [MRNA]</scope>
    <scope>PARTIAL PROTEIN SEQUENCE</scope>
    <scope>VARIANTS PRO-27; ASP-32; ASN-36; PRO-67; MET-71; VAL-91 AND PHE-111</scope>
    <source>
        <tissue>Flower</tissue>
    </source>
</reference>
<reference key="2">
    <citation type="journal article" date="1983" name="J. Immunol.">
        <title>Isolation and properties of a new short ragweed pollen allergen, Ra6.</title>
        <authorList>
            <person name="Roebber M."/>
            <person name="Hussain R."/>
            <person name="Klapper D.G."/>
            <person name="Marsh D.G."/>
        </authorList>
    </citation>
    <scope>PROTEIN SEQUENCE OF N-TERMINUS</scope>
    <scope>VARIANTS RA6A PRO-27 AND ASN-36</scope>
    <scope>VARIANTS RA6B ALA-26 DEL AND ALA-32</scope>
    <scope>CHARACTERIZATION</scope>
    <source>
        <tissue>Pollen</tissue>
    </source>
</reference>